<dbReference type="EC" id="3.5.1.108" evidence="1"/>
<dbReference type="EMBL" id="CP000090">
    <property type="protein sequence ID" value="AAZ62332.1"/>
    <property type="molecule type" value="Genomic_DNA"/>
</dbReference>
<dbReference type="SMR" id="Q46X01"/>
<dbReference type="STRING" id="264198.Reut_A2972"/>
<dbReference type="KEGG" id="reu:Reut_A2972"/>
<dbReference type="eggNOG" id="COG0774">
    <property type="taxonomic scope" value="Bacteria"/>
</dbReference>
<dbReference type="HOGENOM" id="CLU_046528_1_0_4"/>
<dbReference type="OrthoDB" id="9802746at2"/>
<dbReference type="UniPathway" id="UPA00359">
    <property type="reaction ID" value="UER00478"/>
</dbReference>
<dbReference type="GO" id="GO:0016020">
    <property type="term" value="C:membrane"/>
    <property type="evidence" value="ECO:0007669"/>
    <property type="project" value="GOC"/>
</dbReference>
<dbReference type="GO" id="GO:0046872">
    <property type="term" value="F:metal ion binding"/>
    <property type="evidence" value="ECO:0007669"/>
    <property type="project" value="UniProtKB-KW"/>
</dbReference>
<dbReference type="GO" id="GO:0103117">
    <property type="term" value="F:UDP-3-O-acyl-N-acetylglucosamine deacetylase activity"/>
    <property type="evidence" value="ECO:0007669"/>
    <property type="project" value="UniProtKB-UniRule"/>
</dbReference>
<dbReference type="GO" id="GO:0009245">
    <property type="term" value="P:lipid A biosynthetic process"/>
    <property type="evidence" value="ECO:0007669"/>
    <property type="project" value="UniProtKB-UniRule"/>
</dbReference>
<dbReference type="Gene3D" id="3.30.230.20">
    <property type="entry name" value="lpxc deacetylase, domain 1"/>
    <property type="match status" value="1"/>
</dbReference>
<dbReference type="Gene3D" id="3.30.1700.10">
    <property type="entry name" value="lpxc deacetylase, domain 2"/>
    <property type="match status" value="1"/>
</dbReference>
<dbReference type="HAMAP" id="MF_00388">
    <property type="entry name" value="LpxC"/>
    <property type="match status" value="1"/>
</dbReference>
<dbReference type="InterPro" id="IPR020568">
    <property type="entry name" value="Ribosomal_Su5_D2-typ_SF"/>
</dbReference>
<dbReference type="InterPro" id="IPR004463">
    <property type="entry name" value="UDP-acyl_GlcNac_deAcase"/>
</dbReference>
<dbReference type="InterPro" id="IPR011334">
    <property type="entry name" value="UDP-acyl_GlcNac_deAcase_C"/>
</dbReference>
<dbReference type="InterPro" id="IPR015870">
    <property type="entry name" value="UDP-acyl_N-AcGlcN_deAcase_N"/>
</dbReference>
<dbReference type="NCBIfam" id="TIGR00325">
    <property type="entry name" value="lpxC"/>
    <property type="match status" value="1"/>
</dbReference>
<dbReference type="PANTHER" id="PTHR33694">
    <property type="entry name" value="UDP-3-O-ACYL-N-ACETYLGLUCOSAMINE DEACETYLASE 1, MITOCHONDRIAL-RELATED"/>
    <property type="match status" value="1"/>
</dbReference>
<dbReference type="PANTHER" id="PTHR33694:SF1">
    <property type="entry name" value="UDP-3-O-ACYL-N-ACETYLGLUCOSAMINE DEACETYLASE 1, MITOCHONDRIAL-RELATED"/>
    <property type="match status" value="1"/>
</dbReference>
<dbReference type="Pfam" id="PF03331">
    <property type="entry name" value="LpxC"/>
    <property type="match status" value="1"/>
</dbReference>
<dbReference type="SUPFAM" id="SSF54211">
    <property type="entry name" value="Ribosomal protein S5 domain 2-like"/>
    <property type="match status" value="2"/>
</dbReference>
<evidence type="ECO:0000255" key="1">
    <source>
        <dbReference type="HAMAP-Rule" id="MF_00388"/>
    </source>
</evidence>
<gene>
    <name evidence="1" type="primary">lpxC</name>
    <name type="ordered locus">Reut_A2972</name>
</gene>
<reference key="1">
    <citation type="journal article" date="2010" name="PLoS ONE">
        <title>The complete multipartite genome sequence of Cupriavidus necator JMP134, a versatile pollutant degrader.</title>
        <authorList>
            <person name="Lykidis A."/>
            <person name="Perez-Pantoja D."/>
            <person name="Ledger T."/>
            <person name="Mavromatis K."/>
            <person name="Anderson I.J."/>
            <person name="Ivanova N.N."/>
            <person name="Hooper S.D."/>
            <person name="Lapidus A."/>
            <person name="Lucas S."/>
            <person name="Gonzalez B."/>
            <person name="Kyrpides N.C."/>
        </authorList>
    </citation>
    <scope>NUCLEOTIDE SEQUENCE [LARGE SCALE GENOMIC DNA]</scope>
    <source>
        <strain>JMP134 / LMG 1197</strain>
    </source>
</reference>
<organism>
    <name type="scientific">Cupriavidus pinatubonensis (strain JMP 134 / LMG 1197)</name>
    <name type="common">Cupriavidus necator (strain JMP 134)</name>
    <dbReference type="NCBI Taxonomy" id="264198"/>
    <lineage>
        <taxon>Bacteria</taxon>
        <taxon>Pseudomonadati</taxon>
        <taxon>Pseudomonadota</taxon>
        <taxon>Betaproteobacteria</taxon>
        <taxon>Burkholderiales</taxon>
        <taxon>Burkholderiaceae</taxon>
        <taxon>Cupriavidus</taxon>
    </lineage>
</organism>
<accession>Q46X01</accession>
<feature type="chain" id="PRO_0000253689" description="UDP-3-O-acyl-N-acetylglucosamine deacetylase">
    <location>
        <begin position="1"/>
        <end position="305"/>
    </location>
</feature>
<feature type="active site" description="Proton donor" evidence="1">
    <location>
        <position position="264"/>
    </location>
</feature>
<feature type="binding site" evidence="1">
    <location>
        <position position="78"/>
    </location>
    <ligand>
        <name>Zn(2+)</name>
        <dbReference type="ChEBI" id="CHEBI:29105"/>
    </ligand>
</feature>
<feature type="binding site" evidence="1">
    <location>
        <position position="237"/>
    </location>
    <ligand>
        <name>Zn(2+)</name>
        <dbReference type="ChEBI" id="CHEBI:29105"/>
    </ligand>
</feature>
<feature type="binding site" evidence="1">
    <location>
        <position position="241"/>
    </location>
    <ligand>
        <name>Zn(2+)</name>
        <dbReference type="ChEBI" id="CHEBI:29105"/>
    </ligand>
</feature>
<proteinExistence type="inferred from homology"/>
<comment type="function">
    <text evidence="1">Catalyzes the hydrolysis of UDP-3-O-myristoyl-N-acetylglucosamine to form UDP-3-O-myristoylglucosamine and acetate, the committed step in lipid A biosynthesis.</text>
</comment>
<comment type="catalytic activity">
    <reaction evidence="1">
        <text>a UDP-3-O-[(3R)-3-hydroxyacyl]-N-acetyl-alpha-D-glucosamine + H2O = a UDP-3-O-[(3R)-3-hydroxyacyl]-alpha-D-glucosamine + acetate</text>
        <dbReference type="Rhea" id="RHEA:67816"/>
        <dbReference type="ChEBI" id="CHEBI:15377"/>
        <dbReference type="ChEBI" id="CHEBI:30089"/>
        <dbReference type="ChEBI" id="CHEBI:137740"/>
        <dbReference type="ChEBI" id="CHEBI:173225"/>
        <dbReference type="EC" id="3.5.1.108"/>
    </reaction>
</comment>
<comment type="cofactor">
    <cofactor evidence="1">
        <name>Zn(2+)</name>
        <dbReference type="ChEBI" id="CHEBI:29105"/>
    </cofactor>
</comment>
<comment type="pathway">
    <text evidence="1">Glycolipid biosynthesis; lipid IV(A) biosynthesis; lipid IV(A) from (3R)-3-hydroxytetradecanoyl-[acyl-carrier-protein] and UDP-N-acetyl-alpha-D-glucosamine: step 2/6.</text>
</comment>
<comment type="similarity">
    <text evidence="1">Belongs to the LpxC family.</text>
</comment>
<keyword id="KW-0378">Hydrolase</keyword>
<keyword id="KW-0441">Lipid A biosynthesis</keyword>
<keyword id="KW-0444">Lipid biosynthesis</keyword>
<keyword id="KW-0443">Lipid metabolism</keyword>
<keyword id="KW-0479">Metal-binding</keyword>
<keyword id="KW-0862">Zinc</keyword>
<name>LPXC_CUPPJ</name>
<protein>
    <recommendedName>
        <fullName evidence="1">UDP-3-O-acyl-N-acetylglucosamine deacetylase</fullName>
        <shortName evidence="1">UDP-3-O-acyl-GlcNAc deacetylase</shortName>
        <ecNumber evidence="1">3.5.1.108</ecNumber>
    </recommendedName>
    <alternativeName>
        <fullName evidence="1">UDP-3-O-[R-3-hydroxymyristoyl]-N-acetylglucosamine deacetylase</fullName>
    </alternativeName>
</protein>
<sequence>MLKQRTIKSLVKTVGIGLHSGRKVTLTLRPAPADTGIVFTRVDLPEAVEIPAAAGAIGDTRLASVLQKDGARVSTVEHLMSACAGLGIDNLYVDVDAEEIPIMDGSAASFVFLLQSAGIEQQNAAKRFIRVKKAVEVREGDKLARLEPFFGFKLSFTIDFRHPAVDKTGQNFEIDFADTSYVREIARARTFGFAHEVEALREMGLARGGSLDNAIVLDEHRMLNNEELRYGDEFVRHKILDAIGDLYVVGHPLIGAYVAHKSGHGLNNQLLRALLADQEAYEVVTFDRMEDAPVAFLPQVQPAFA</sequence>